<comment type="function">
    <text evidence="1">Required for the first step of histidine biosynthesis. May allow the feedback regulation of ATP phosphoribosyltransferase activity by histidine.</text>
</comment>
<comment type="pathway">
    <text evidence="1">Amino-acid biosynthesis; L-histidine biosynthesis; L-histidine from 5-phospho-alpha-D-ribose 1-diphosphate: step 1/9.</text>
</comment>
<comment type="subunit">
    <text evidence="1">Heteromultimer composed of HisG and HisZ subunits.</text>
</comment>
<comment type="subcellular location">
    <subcellularLocation>
        <location evidence="1">Cytoplasm</location>
    </subcellularLocation>
</comment>
<comment type="miscellaneous">
    <text>This function is generally fulfilled by the C-terminal part of HisG, which is missing in some bacteria such as this one.</text>
</comment>
<comment type="similarity">
    <text evidence="1">Belongs to the class-II aminoacyl-tRNA synthetase family. HisZ subfamily.</text>
</comment>
<comment type="sequence caution" evidence="2">
    <conflict type="erroneous initiation">
        <sequence resource="EMBL-CDS" id="BAE51995"/>
    </conflict>
</comment>
<sequence length="379" mass="39612">MTESANRALLPAGLRDMLPPDAEFEASVVHSLMSMFARHGYDRVKPPLIEFEESLLDGAGGGTSSQTFRVMDPMSQKMMGLRADMTPQVARIAATRLGSQPRPLRLSYAGQVLRVKGTQLRPERQFGQAGIELIGSDDAGADAEVLVMTAEALDDLGVPGVSADLALPTLVPAVFAAYGINGETADRLRAALDHKDSATVAAQGGAAAPLLQALIAAAGPAARALAELCALDLPPAAAAERDRLARVVELAGADLPSLTLTVDPVENRGFEYHTGLSFTLFARNMGAELGRGGRYQGGGGEPATGATLFMDSVLAALPGPKPAKRLFVPAGTPRAWAQAFRAQGWVTVSGLDPAADPQVEAKHQGCRHRLGPDGIVEVE</sequence>
<name>HISZ_PARM1</name>
<protein>
    <recommendedName>
        <fullName evidence="1">ATP phosphoribosyltransferase regulatory subunit</fullName>
    </recommendedName>
</protein>
<gene>
    <name evidence="1" type="primary">hisZ</name>
    <name type="ordered locus">amb3191</name>
</gene>
<evidence type="ECO:0000255" key="1">
    <source>
        <dbReference type="HAMAP-Rule" id="MF_00125"/>
    </source>
</evidence>
<evidence type="ECO:0000305" key="2"/>
<proteinExistence type="inferred from homology"/>
<keyword id="KW-0028">Amino-acid biosynthesis</keyword>
<keyword id="KW-0963">Cytoplasm</keyword>
<keyword id="KW-0368">Histidine biosynthesis</keyword>
<organism>
    <name type="scientific">Paramagnetospirillum magneticum (strain ATCC 700264 / AMB-1)</name>
    <name type="common">Magnetospirillum magneticum</name>
    <dbReference type="NCBI Taxonomy" id="342108"/>
    <lineage>
        <taxon>Bacteria</taxon>
        <taxon>Pseudomonadati</taxon>
        <taxon>Pseudomonadota</taxon>
        <taxon>Alphaproteobacteria</taxon>
        <taxon>Rhodospirillales</taxon>
        <taxon>Magnetospirillaceae</taxon>
        <taxon>Paramagnetospirillum</taxon>
    </lineage>
</organism>
<feature type="chain" id="PRO_0000242839" description="ATP phosphoribosyltransferase regulatory subunit">
    <location>
        <begin position="1"/>
        <end position="379"/>
    </location>
</feature>
<dbReference type="EMBL" id="AP007255">
    <property type="protein sequence ID" value="BAE51995.1"/>
    <property type="status" value="ALT_INIT"/>
    <property type="molecule type" value="Genomic_DNA"/>
</dbReference>
<dbReference type="RefSeq" id="WP_043744838.1">
    <property type="nucleotide sequence ID" value="NC_007626.1"/>
</dbReference>
<dbReference type="SMR" id="Q2W2D0"/>
<dbReference type="STRING" id="342108.amb3191"/>
<dbReference type="KEGG" id="mag:amb3191"/>
<dbReference type="HOGENOM" id="CLU_025113_0_1_5"/>
<dbReference type="OrthoDB" id="9769617at2"/>
<dbReference type="UniPathway" id="UPA00031">
    <property type="reaction ID" value="UER00006"/>
</dbReference>
<dbReference type="Proteomes" id="UP000007058">
    <property type="component" value="Chromosome"/>
</dbReference>
<dbReference type="GO" id="GO:0005737">
    <property type="term" value="C:cytoplasm"/>
    <property type="evidence" value="ECO:0007669"/>
    <property type="project" value="UniProtKB-SubCell"/>
</dbReference>
<dbReference type="GO" id="GO:0004821">
    <property type="term" value="F:histidine-tRNA ligase activity"/>
    <property type="evidence" value="ECO:0007669"/>
    <property type="project" value="TreeGrafter"/>
</dbReference>
<dbReference type="GO" id="GO:0006427">
    <property type="term" value="P:histidyl-tRNA aminoacylation"/>
    <property type="evidence" value="ECO:0007669"/>
    <property type="project" value="TreeGrafter"/>
</dbReference>
<dbReference type="GO" id="GO:0000105">
    <property type="term" value="P:L-histidine biosynthetic process"/>
    <property type="evidence" value="ECO:0007669"/>
    <property type="project" value="UniProtKB-UniRule"/>
</dbReference>
<dbReference type="Gene3D" id="3.30.930.10">
    <property type="entry name" value="Bira Bifunctional Protein, Domain 2"/>
    <property type="match status" value="1"/>
</dbReference>
<dbReference type="HAMAP" id="MF_00125">
    <property type="entry name" value="HisZ"/>
    <property type="match status" value="1"/>
</dbReference>
<dbReference type="InterPro" id="IPR006195">
    <property type="entry name" value="aa-tRNA-synth_II"/>
</dbReference>
<dbReference type="InterPro" id="IPR045864">
    <property type="entry name" value="aa-tRNA-synth_II/BPL/LPL"/>
</dbReference>
<dbReference type="InterPro" id="IPR041715">
    <property type="entry name" value="HisRS-like_core"/>
</dbReference>
<dbReference type="InterPro" id="IPR004516">
    <property type="entry name" value="HisRS/HisZ"/>
</dbReference>
<dbReference type="InterPro" id="IPR004517">
    <property type="entry name" value="HisZ"/>
</dbReference>
<dbReference type="PANTHER" id="PTHR43707:SF1">
    <property type="entry name" value="HISTIDINE--TRNA LIGASE, MITOCHONDRIAL-RELATED"/>
    <property type="match status" value="1"/>
</dbReference>
<dbReference type="PANTHER" id="PTHR43707">
    <property type="entry name" value="HISTIDYL-TRNA SYNTHETASE"/>
    <property type="match status" value="1"/>
</dbReference>
<dbReference type="Pfam" id="PF13393">
    <property type="entry name" value="tRNA-synt_His"/>
    <property type="match status" value="1"/>
</dbReference>
<dbReference type="PIRSF" id="PIRSF001549">
    <property type="entry name" value="His-tRNA_synth"/>
    <property type="match status" value="1"/>
</dbReference>
<dbReference type="SUPFAM" id="SSF55681">
    <property type="entry name" value="Class II aaRS and biotin synthetases"/>
    <property type="match status" value="1"/>
</dbReference>
<dbReference type="PROSITE" id="PS50862">
    <property type="entry name" value="AA_TRNA_LIGASE_II"/>
    <property type="match status" value="1"/>
</dbReference>
<reference key="1">
    <citation type="journal article" date="2005" name="DNA Res.">
        <title>Complete genome sequence of the facultative anaerobic magnetotactic bacterium Magnetospirillum sp. strain AMB-1.</title>
        <authorList>
            <person name="Matsunaga T."/>
            <person name="Okamura Y."/>
            <person name="Fukuda Y."/>
            <person name="Wahyudi A.T."/>
            <person name="Murase Y."/>
            <person name="Takeyama H."/>
        </authorList>
    </citation>
    <scope>NUCLEOTIDE SEQUENCE [LARGE SCALE GENOMIC DNA]</scope>
    <source>
        <strain>ATCC 700264 / AMB-1</strain>
    </source>
</reference>
<accession>Q2W2D0</accession>